<gene>
    <name evidence="1" type="primary">glyQ</name>
    <name type="ordered locus">Shewana3_0017</name>
</gene>
<feature type="chain" id="PRO_1000047489" description="Glycine--tRNA ligase alpha subunit">
    <location>
        <begin position="1"/>
        <end position="301"/>
    </location>
</feature>
<comment type="catalytic activity">
    <reaction evidence="1">
        <text>tRNA(Gly) + glycine + ATP = glycyl-tRNA(Gly) + AMP + diphosphate</text>
        <dbReference type="Rhea" id="RHEA:16013"/>
        <dbReference type="Rhea" id="RHEA-COMP:9664"/>
        <dbReference type="Rhea" id="RHEA-COMP:9683"/>
        <dbReference type="ChEBI" id="CHEBI:30616"/>
        <dbReference type="ChEBI" id="CHEBI:33019"/>
        <dbReference type="ChEBI" id="CHEBI:57305"/>
        <dbReference type="ChEBI" id="CHEBI:78442"/>
        <dbReference type="ChEBI" id="CHEBI:78522"/>
        <dbReference type="ChEBI" id="CHEBI:456215"/>
        <dbReference type="EC" id="6.1.1.14"/>
    </reaction>
</comment>
<comment type="subunit">
    <text evidence="1">Tetramer of two alpha and two beta subunits.</text>
</comment>
<comment type="subcellular location">
    <subcellularLocation>
        <location evidence="1">Cytoplasm</location>
    </subcellularLocation>
</comment>
<comment type="similarity">
    <text evidence="1">Belongs to the class-II aminoacyl-tRNA synthetase family.</text>
</comment>
<evidence type="ECO:0000255" key="1">
    <source>
        <dbReference type="HAMAP-Rule" id="MF_00254"/>
    </source>
</evidence>
<keyword id="KW-0030">Aminoacyl-tRNA synthetase</keyword>
<keyword id="KW-0067">ATP-binding</keyword>
<keyword id="KW-0963">Cytoplasm</keyword>
<keyword id="KW-0436">Ligase</keyword>
<keyword id="KW-0547">Nucleotide-binding</keyword>
<keyword id="KW-0648">Protein biosynthesis</keyword>
<protein>
    <recommendedName>
        <fullName evidence="1">Glycine--tRNA ligase alpha subunit</fullName>
        <ecNumber evidence="1">6.1.1.14</ecNumber>
    </recommendedName>
    <alternativeName>
        <fullName evidence="1">Glycyl-tRNA synthetase alpha subunit</fullName>
        <shortName evidence="1">GlyRS</shortName>
    </alternativeName>
</protein>
<sequence length="301" mass="34478">MTTKHDVKTFQGFILTLQEYWAQQGCAIVQPLDMEVGAGTFHPQTFLRSLGPEPMSSAYVQPSRRPTDGRYGENPNRLQHYYQFQVVLKPSPDNIQELYLGSLQALGIDTQIHDIRFVEDNWESPTLGAWGLGWEVWLNGMEVTQFTYFQQVGGLECSPVTGEITYGLERLAMYIQGVDSVYDLVWTDGPMGRITYGDVFHQNEVEQSTYNFEHADVDFMFALFDQCEKMCQHLLSLEKPLPLPAYEQVMKASHAFNLLDARHAISVTERQRYILRVRTMAKAVAESYYQAREALGFPMCK</sequence>
<organism>
    <name type="scientific">Shewanella sp. (strain ANA-3)</name>
    <dbReference type="NCBI Taxonomy" id="94122"/>
    <lineage>
        <taxon>Bacteria</taxon>
        <taxon>Pseudomonadati</taxon>
        <taxon>Pseudomonadota</taxon>
        <taxon>Gammaproteobacteria</taxon>
        <taxon>Alteromonadales</taxon>
        <taxon>Shewanellaceae</taxon>
        <taxon>Shewanella</taxon>
    </lineage>
</organism>
<proteinExistence type="inferred from homology"/>
<accession>A0KR43</accession>
<reference key="1">
    <citation type="submission" date="2006-09" db="EMBL/GenBank/DDBJ databases">
        <title>Complete sequence of chromosome 1 of Shewanella sp. ANA-3.</title>
        <authorList>
            <person name="Copeland A."/>
            <person name="Lucas S."/>
            <person name="Lapidus A."/>
            <person name="Barry K."/>
            <person name="Detter J.C."/>
            <person name="Glavina del Rio T."/>
            <person name="Hammon N."/>
            <person name="Israni S."/>
            <person name="Dalin E."/>
            <person name="Tice H."/>
            <person name="Pitluck S."/>
            <person name="Chertkov O."/>
            <person name="Brettin T."/>
            <person name="Bruce D."/>
            <person name="Han C."/>
            <person name="Tapia R."/>
            <person name="Gilna P."/>
            <person name="Schmutz J."/>
            <person name="Larimer F."/>
            <person name="Land M."/>
            <person name="Hauser L."/>
            <person name="Kyrpides N."/>
            <person name="Kim E."/>
            <person name="Newman D."/>
            <person name="Salticov C."/>
            <person name="Konstantinidis K."/>
            <person name="Klappenback J."/>
            <person name="Tiedje J."/>
            <person name="Richardson P."/>
        </authorList>
    </citation>
    <scope>NUCLEOTIDE SEQUENCE [LARGE SCALE GENOMIC DNA]</scope>
    <source>
        <strain>ANA-3</strain>
    </source>
</reference>
<dbReference type="EC" id="6.1.1.14" evidence="1"/>
<dbReference type="EMBL" id="CP000469">
    <property type="protein sequence ID" value="ABK46262.1"/>
    <property type="molecule type" value="Genomic_DNA"/>
</dbReference>
<dbReference type="RefSeq" id="WP_011070431.1">
    <property type="nucleotide sequence ID" value="NC_008577.1"/>
</dbReference>
<dbReference type="SMR" id="A0KR43"/>
<dbReference type="STRING" id="94122.Shewana3_0017"/>
<dbReference type="GeneID" id="67441599"/>
<dbReference type="KEGG" id="shn:Shewana3_0017"/>
<dbReference type="eggNOG" id="COG0752">
    <property type="taxonomic scope" value="Bacteria"/>
</dbReference>
<dbReference type="HOGENOM" id="CLU_057066_1_0_6"/>
<dbReference type="OrthoDB" id="9802183at2"/>
<dbReference type="Proteomes" id="UP000002589">
    <property type="component" value="Chromosome"/>
</dbReference>
<dbReference type="GO" id="GO:0005829">
    <property type="term" value="C:cytosol"/>
    <property type="evidence" value="ECO:0007669"/>
    <property type="project" value="TreeGrafter"/>
</dbReference>
<dbReference type="GO" id="GO:0005524">
    <property type="term" value="F:ATP binding"/>
    <property type="evidence" value="ECO:0007669"/>
    <property type="project" value="UniProtKB-UniRule"/>
</dbReference>
<dbReference type="GO" id="GO:0004820">
    <property type="term" value="F:glycine-tRNA ligase activity"/>
    <property type="evidence" value="ECO:0007669"/>
    <property type="project" value="UniProtKB-UniRule"/>
</dbReference>
<dbReference type="GO" id="GO:0006426">
    <property type="term" value="P:glycyl-tRNA aminoacylation"/>
    <property type="evidence" value="ECO:0007669"/>
    <property type="project" value="UniProtKB-UniRule"/>
</dbReference>
<dbReference type="CDD" id="cd00733">
    <property type="entry name" value="GlyRS_alpha_core"/>
    <property type="match status" value="1"/>
</dbReference>
<dbReference type="FunFam" id="3.30.930.10:FF:000006">
    <property type="entry name" value="Glycine--tRNA ligase alpha subunit"/>
    <property type="match status" value="1"/>
</dbReference>
<dbReference type="Gene3D" id="3.30.930.10">
    <property type="entry name" value="Bira Bifunctional Protein, Domain 2"/>
    <property type="match status" value="1"/>
</dbReference>
<dbReference type="Gene3D" id="1.20.58.180">
    <property type="entry name" value="Class II aaRS and biotin synthetases, domain 2"/>
    <property type="match status" value="1"/>
</dbReference>
<dbReference type="HAMAP" id="MF_00254">
    <property type="entry name" value="Gly_tRNA_synth_alpha"/>
    <property type="match status" value="1"/>
</dbReference>
<dbReference type="InterPro" id="IPR045864">
    <property type="entry name" value="aa-tRNA-synth_II/BPL/LPL"/>
</dbReference>
<dbReference type="InterPro" id="IPR006194">
    <property type="entry name" value="Gly-tRNA-synth_heterodimer"/>
</dbReference>
<dbReference type="InterPro" id="IPR002310">
    <property type="entry name" value="Gly-tRNA_ligase_asu"/>
</dbReference>
<dbReference type="NCBIfam" id="TIGR00388">
    <property type="entry name" value="glyQ"/>
    <property type="match status" value="1"/>
</dbReference>
<dbReference type="NCBIfam" id="NF006827">
    <property type="entry name" value="PRK09348.1"/>
    <property type="match status" value="1"/>
</dbReference>
<dbReference type="PANTHER" id="PTHR30075:SF2">
    <property type="entry name" value="GLYCINE--TRNA LIGASE, CHLOROPLASTIC_MITOCHONDRIAL 2"/>
    <property type="match status" value="1"/>
</dbReference>
<dbReference type="PANTHER" id="PTHR30075">
    <property type="entry name" value="GLYCYL-TRNA SYNTHETASE"/>
    <property type="match status" value="1"/>
</dbReference>
<dbReference type="Pfam" id="PF02091">
    <property type="entry name" value="tRNA-synt_2e"/>
    <property type="match status" value="1"/>
</dbReference>
<dbReference type="PRINTS" id="PR01044">
    <property type="entry name" value="TRNASYNTHGA"/>
</dbReference>
<dbReference type="SUPFAM" id="SSF55681">
    <property type="entry name" value="Class II aaRS and biotin synthetases"/>
    <property type="match status" value="1"/>
</dbReference>
<dbReference type="PROSITE" id="PS50861">
    <property type="entry name" value="AA_TRNA_LIGASE_II_GLYAB"/>
    <property type="match status" value="1"/>
</dbReference>
<name>SYGA_SHESA</name>